<geneLocation type="plastid"/>
<dbReference type="EMBL" id="AM711640">
    <property type="protein sequence ID" value="CAM98400.1"/>
    <property type="molecule type" value="Genomic_DNA"/>
</dbReference>
<dbReference type="RefSeq" id="YP_001430114.1">
    <property type="nucleotide sequence ID" value="NC_009766.1"/>
</dbReference>
<dbReference type="SMR" id="A7M972"/>
<dbReference type="GeneID" id="5536605"/>
<dbReference type="GO" id="GO:0009539">
    <property type="term" value="C:photosystem II reaction center"/>
    <property type="evidence" value="ECO:0007669"/>
    <property type="project" value="InterPro"/>
</dbReference>
<dbReference type="GO" id="GO:0042170">
    <property type="term" value="C:plastid membrane"/>
    <property type="evidence" value="ECO:0007669"/>
    <property type="project" value="UniProtKB-SubCell"/>
</dbReference>
<dbReference type="GO" id="GO:0042651">
    <property type="term" value="C:thylakoid membrane"/>
    <property type="evidence" value="ECO:0007669"/>
    <property type="project" value="UniProtKB-UniRule"/>
</dbReference>
<dbReference type="GO" id="GO:0015979">
    <property type="term" value="P:photosynthesis"/>
    <property type="evidence" value="ECO:0007669"/>
    <property type="project" value="UniProtKB-UniRule"/>
</dbReference>
<dbReference type="Gene3D" id="6.10.250.2070">
    <property type="match status" value="1"/>
</dbReference>
<dbReference type="HAMAP" id="MF_01305">
    <property type="entry name" value="PSII_PsbJ"/>
    <property type="match status" value="1"/>
</dbReference>
<dbReference type="InterPro" id="IPR002682">
    <property type="entry name" value="PSII_PsbJ"/>
</dbReference>
<dbReference type="InterPro" id="IPR037267">
    <property type="entry name" value="PSII_PsbJ_sf"/>
</dbReference>
<dbReference type="NCBIfam" id="NF002722">
    <property type="entry name" value="PRK02565.1"/>
    <property type="match status" value="1"/>
</dbReference>
<dbReference type="PANTHER" id="PTHR34812">
    <property type="entry name" value="PHOTOSYSTEM II REACTION CENTER PROTEIN J"/>
    <property type="match status" value="1"/>
</dbReference>
<dbReference type="PANTHER" id="PTHR34812:SF3">
    <property type="entry name" value="PHOTOSYSTEM II REACTION CENTER PROTEIN J"/>
    <property type="match status" value="1"/>
</dbReference>
<dbReference type="Pfam" id="PF01788">
    <property type="entry name" value="PsbJ"/>
    <property type="match status" value="1"/>
</dbReference>
<dbReference type="SUPFAM" id="SSF161021">
    <property type="entry name" value="Photosystem II reaction center protein J, PsbJ"/>
    <property type="match status" value="1"/>
</dbReference>
<keyword id="KW-0472">Membrane</keyword>
<keyword id="KW-0602">Photosynthesis</keyword>
<keyword id="KW-0604">Photosystem II</keyword>
<keyword id="KW-0934">Plastid</keyword>
<keyword id="KW-0674">Reaction center</keyword>
<keyword id="KW-0812">Transmembrane</keyword>
<keyword id="KW-1133">Transmembrane helix</keyword>
<sequence>MNDTTGRIPLWIIGTVTGIFGIGLIGIFFYGSYSGLGSSL</sequence>
<accession>A7M972</accession>
<organism>
    <name type="scientific">Cuscuta reflexa</name>
    <name type="common">Southern Asian dodder</name>
    <dbReference type="NCBI Taxonomy" id="4129"/>
    <lineage>
        <taxon>Eukaryota</taxon>
        <taxon>Viridiplantae</taxon>
        <taxon>Streptophyta</taxon>
        <taxon>Embryophyta</taxon>
        <taxon>Tracheophyta</taxon>
        <taxon>Spermatophyta</taxon>
        <taxon>Magnoliopsida</taxon>
        <taxon>eudicotyledons</taxon>
        <taxon>Gunneridae</taxon>
        <taxon>Pentapetalae</taxon>
        <taxon>asterids</taxon>
        <taxon>lamiids</taxon>
        <taxon>Solanales</taxon>
        <taxon>Convolvulaceae</taxon>
        <taxon>Cuscuteae</taxon>
        <taxon>Cuscuta</taxon>
        <taxon>Cuscuta subgen. Monogynella</taxon>
    </lineage>
</organism>
<comment type="function">
    <text evidence="1">One of the components of the core complex of photosystem II (PSII). PSII is a light-driven water:plastoquinone oxidoreductase that uses light energy to abstract electrons from H(2)O, generating O(2) and a proton gradient subsequently used for ATP formation. It consists of a core antenna complex that captures photons, and an electron transfer chain that converts photonic excitation into a charge separation.</text>
</comment>
<comment type="subunit">
    <text evidence="1">PSII is composed of 1 copy each of membrane proteins PsbA, PsbB, PsbC, PsbD, PsbE, PsbF, PsbH, PsbI, PsbJ, PsbK, PsbL, PsbM, PsbT, PsbX, PsbY, PsbZ, Psb30/Ycf12, at least 3 peripheral proteins of the oxygen-evolving complex and a large number of cofactors. It forms dimeric complexes.</text>
</comment>
<comment type="subcellular location">
    <subcellularLocation>
        <location evidence="1">Plastid membrane</location>
        <topology evidence="1">Single-pass membrane protein</topology>
    </subcellularLocation>
</comment>
<comment type="similarity">
    <text evidence="1">Belongs to the PsbJ family.</text>
</comment>
<comment type="caution">
    <text evidence="2">Young tissue from this organism is photosynthetic and contains some thylakoids, although the photosynthetic activity does not exceed the light compensation point.</text>
</comment>
<evidence type="ECO:0000255" key="1">
    <source>
        <dbReference type="HAMAP-Rule" id="MF_01305"/>
    </source>
</evidence>
<evidence type="ECO:0000305" key="2"/>
<feature type="chain" id="PRO_0000322056" description="Photosystem II reaction center protein J">
    <location>
        <begin position="1"/>
        <end position="40"/>
    </location>
</feature>
<feature type="transmembrane region" description="Helical" evidence="1">
    <location>
        <begin position="8"/>
        <end position="28"/>
    </location>
</feature>
<gene>
    <name evidence="1" type="primary">psbJ</name>
</gene>
<protein>
    <recommendedName>
        <fullName evidence="1">Photosystem II reaction center protein J</fullName>
        <shortName evidence="1">PSII-J</shortName>
    </recommendedName>
</protein>
<reference key="1">
    <citation type="journal article" date="2007" name="BMC Plant Biol.">
        <title>Complete DNA sequences of the plastid genomes of two parasitic flowering plant species, Cuscuta reflexa and Cuscuta gronovii.</title>
        <authorList>
            <person name="Funk H.T."/>
            <person name="Berg S."/>
            <person name="Krupinska K."/>
            <person name="Maier U.-G."/>
            <person name="Krause K."/>
        </authorList>
    </citation>
    <scope>NUCLEOTIDE SEQUENCE [LARGE SCALE GENOMIC DNA]</scope>
</reference>
<name>PSBJ_CUSRE</name>
<proteinExistence type="inferred from homology"/>